<organism>
    <name type="scientific">Haemophilus influenzae (strain ATCC 51907 / DSM 11121 / KW20 / Rd)</name>
    <dbReference type="NCBI Taxonomy" id="71421"/>
    <lineage>
        <taxon>Bacteria</taxon>
        <taxon>Pseudomonadati</taxon>
        <taxon>Pseudomonadota</taxon>
        <taxon>Gammaproteobacteria</taxon>
        <taxon>Pasteurellales</taxon>
        <taxon>Pasteurellaceae</taxon>
        <taxon>Haemophilus</taxon>
    </lineage>
</organism>
<dbReference type="EC" id="2.7.7.23" evidence="2"/>
<dbReference type="EC" id="2.3.1.157" evidence="2"/>
<dbReference type="EMBL" id="L42023">
    <property type="protein sequence ID" value="AAC22302.1"/>
    <property type="molecule type" value="Genomic_DNA"/>
</dbReference>
<dbReference type="PIR" id="G64083">
    <property type="entry name" value="G64083"/>
</dbReference>
<dbReference type="RefSeq" id="NP_438802.1">
    <property type="nucleotide sequence ID" value="NC_000907.1"/>
</dbReference>
<dbReference type="PDB" id="2V0H">
    <property type="method" value="X-ray"/>
    <property type="resolution" value="1.79 A"/>
    <property type="chains" value="A=1-456"/>
</dbReference>
<dbReference type="PDB" id="2V0I">
    <property type="method" value="X-ray"/>
    <property type="resolution" value="1.89 A"/>
    <property type="chains" value="A=1-456"/>
</dbReference>
<dbReference type="PDB" id="2V0J">
    <property type="method" value="X-ray"/>
    <property type="resolution" value="2.00 A"/>
    <property type="chains" value="A=1-456"/>
</dbReference>
<dbReference type="PDB" id="2V0K">
    <property type="method" value="X-ray"/>
    <property type="resolution" value="2.30 A"/>
    <property type="chains" value="A=1-456"/>
</dbReference>
<dbReference type="PDB" id="2V0L">
    <property type="method" value="X-ray"/>
    <property type="resolution" value="2.20 A"/>
    <property type="chains" value="A=1-456"/>
</dbReference>
<dbReference type="PDB" id="2VD4">
    <property type="method" value="X-ray"/>
    <property type="resolution" value="1.90 A"/>
    <property type="chains" value="A=1-456"/>
</dbReference>
<dbReference type="PDB" id="2W0V">
    <property type="method" value="X-ray"/>
    <property type="resolution" value="1.99 A"/>
    <property type="chains" value="A=1-456"/>
</dbReference>
<dbReference type="PDB" id="2W0W">
    <property type="method" value="X-ray"/>
    <property type="resolution" value="2.59 A"/>
    <property type="chains" value="A=1-456"/>
</dbReference>
<dbReference type="PDB" id="4E1K">
    <property type="method" value="X-ray"/>
    <property type="resolution" value="2.00 A"/>
    <property type="chains" value="A=1-456"/>
</dbReference>
<dbReference type="PDB" id="4KNR">
    <property type="method" value="X-ray"/>
    <property type="resolution" value="2.10 A"/>
    <property type="chains" value="A=1-456"/>
</dbReference>
<dbReference type="PDB" id="4KNX">
    <property type="method" value="X-ray"/>
    <property type="resolution" value="1.90 A"/>
    <property type="chains" value="A=1-456"/>
</dbReference>
<dbReference type="PDB" id="4KPX">
    <property type="method" value="X-ray"/>
    <property type="resolution" value="2.21 A"/>
    <property type="chains" value="A=1-456"/>
</dbReference>
<dbReference type="PDB" id="4KPZ">
    <property type="method" value="X-ray"/>
    <property type="resolution" value="2.09 A"/>
    <property type="chains" value="A=1-456"/>
</dbReference>
<dbReference type="PDB" id="4KQL">
    <property type="method" value="X-ray"/>
    <property type="resolution" value="2.31 A"/>
    <property type="chains" value="A=1-456"/>
</dbReference>
<dbReference type="PDBsum" id="2V0H"/>
<dbReference type="PDBsum" id="2V0I"/>
<dbReference type="PDBsum" id="2V0J"/>
<dbReference type="PDBsum" id="2V0K"/>
<dbReference type="PDBsum" id="2V0L"/>
<dbReference type="PDBsum" id="2VD4"/>
<dbReference type="PDBsum" id="2W0V"/>
<dbReference type="PDBsum" id="2W0W"/>
<dbReference type="PDBsum" id="4E1K"/>
<dbReference type="PDBsum" id="4KNR"/>
<dbReference type="PDBsum" id="4KNX"/>
<dbReference type="PDBsum" id="4KPX"/>
<dbReference type="PDBsum" id="4KPZ"/>
<dbReference type="PDBsum" id="4KQL"/>
<dbReference type="SMR" id="P43889"/>
<dbReference type="STRING" id="71421.HI_0642"/>
<dbReference type="BindingDB" id="P43889"/>
<dbReference type="DrugBank" id="DB08344">
    <property type="generic name" value="4-chloro-N-(3-methoxypropyl)-N-[(3S)-1-(2-phenylethyl)piperidin-3-yl]benzamide"/>
</dbReference>
<dbReference type="EnsemblBacteria" id="AAC22302">
    <property type="protein sequence ID" value="AAC22302"/>
    <property type="gene ID" value="HI_0642"/>
</dbReference>
<dbReference type="KEGG" id="hin:HI_0642"/>
<dbReference type="PATRIC" id="fig|71421.8.peg.670"/>
<dbReference type="eggNOG" id="COG1207">
    <property type="taxonomic scope" value="Bacteria"/>
</dbReference>
<dbReference type="HOGENOM" id="CLU_029499_15_2_6"/>
<dbReference type="OrthoDB" id="9775031at2"/>
<dbReference type="PhylomeDB" id="P43889"/>
<dbReference type="BioCyc" id="HINF71421:G1GJ1-673-MONOMER"/>
<dbReference type="BRENDA" id="2.3.1.157">
    <property type="organism ID" value="2529"/>
</dbReference>
<dbReference type="BRENDA" id="2.7.7.23">
    <property type="organism ID" value="2529"/>
</dbReference>
<dbReference type="UniPathway" id="UPA00113">
    <property type="reaction ID" value="UER00532"/>
</dbReference>
<dbReference type="UniPathway" id="UPA00113">
    <property type="reaction ID" value="UER00533"/>
</dbReference>
<dbReference type="UniPathway" id="UPA00973"/>
<dbReference type="EvolutionaryTrace" id="P43889"/>
<dbReference type="PRO" id="PR:P43889"/>
<dbReference type="Proteomes" id="UP000000579">
    <property type="component" value="Chromosome"/>
</dbReference>
<dbReference type="GO" id="GO:0005737">
    <property type="term" value="C:cytoplasm"/>
    <property type="evidence" value="ECO:0007669"/>
    <property type="project" value="UniProtKB-SubCell"/>
</dbReference>
<dbReference type="GO" id="GO:0016020">
    <property type="term" value="C:membrane"/>
    <property type="evidence" value="ECO:0007669"/>
    <property type="project" value="GOC"/>
</dbReference>
<dbReference type="GO" id="GO:0019134">
    <property type="term" value="F:glucosamine-1-phosphate N-acetyltransferase activity"/>
    <property type="evidence" value="ECO:0007669"/>
    <property type="project" value="UniProtKB-UniRule"/>
</dbReference>
<dbReference type="GO" id="GO:0000287">
    <property type="term" value="F:magnesium ion binding"/>
    <property type="evidence" value="ECO:0007669"/>
    <property type="project" value="UniProtKB-UniRule"/>
</dbReference>
<dbReference type="GO" id="GO:0003977">
    <property type="term" value="F:UDP-N-acetylglucosamine diphosphorylase activity"/>
    <property type="evidence" value="ECO:0007669"/>
    <property type="project" value="UniProtKB-UniRule"/>
</dbReference>
<dbReference type="GO" id="GO:0000902">
    <property type="term" value="P:cell morphogenesis"/>
    <property type="evidence" value="ECO:0007669"/>
    <property type="project" value="UniProtKB-UniRule"/>
</dbReference>
<dbReference type="GO" id="GO:0071555">
    <property type="term" value="P:cell wall organization"/>
    <property type="evidence" value="ECO:0007669"/>
    <property type="project" value="UniProtKB-KW"/>
</dbReference>
<dbReference type="GO" id="GO:0009245">
    <property type="term" value="P:lipid A biosynthetic process"/>
    <property type="evidence" value="ECO:0007669"/>
    <property type="project" value="UniProtKB-UniRule"/>
</dbReference>
<dbReference type="GO" id="GO:0009252">
    <property type="term" value="P:peptidoglycan biosynthetic process"/>
    <property type="evidence" value="ECO:0007669"/>
    <property type="project" value="UniProtKB-UniRule"/>
</dbReference>
<dbReference type="GO" id="GO:0008360">
    <property type="term" value="P:regulation of cell shape"/>
    <property type="evidence" value="ECO:0007669"/>
    <property type="project" value="UniProtKB-KW"/>
</dbReference>
<dbReference type="GO" id="GO:0006048">
    <property type="term" value="P:UDP-N-acetylglucosamine biosynthetic process"/>
    <property type="evidence" value="ECO:0007669"/>
    <property type="project" value="UniProtKB-UniPathway"/>
</dbReference>
<dbReference type="CDD" id="cd02540">
    <property type="entry name" value="GT2_GlmU_N_bac"/>
    <property type="match status" value="1"/>
</dbReference>
<dbReference type="CDD" id="cd03353">
    <property type="entry name" value="LbH_GlmU_C"/>
    <property type="match status" value="1"/>
</dbReference>
<dbReference type="FunFam" id="3.90.550.10:FF:000006">
    <property type="entry name" value="Bifunctional protein GlmU"/>
    <property type="match status" value="1"/>
</dbReference>
<dbReference type="Gene3D" id="2.160.10.10">
    <property type="entry name" value="Hexapeptide repeat proteins"/>
    <property type="match status" value="1"/>
</dbReference>
<dbReference type="Gene3D" id="3.90.550.10">
    <property type="entry name" value="Spore Coat Polysaccharide Biosynthesis Protein SpsA, Chain A"/>
    <property type="match status" value="1"/>
</dbReference>
<dbReference type="HAMAP" id="MF_01631">
    <property type="entry name" value="GlmU"/>
    <property type="match status" value="1"/>
</dbReference>
<dbReference type="InterPro" id="IPR005882">
    <property type="entry name" value="Bifunctional_GlmU"/>
</dbReference>
<dbReference type="InterPro" id="IPR050065">
    <property type="entry name" value="GlmU-like"/>
</dbReference>
<dbReference type="InterPro" id="IPR038009">
    <property type="entry name" value="GlmU_C_LbH"/>
</dbReference>
<dbReference type="InterPro" id="IPR001451">
    <property type="entry name" value="Hexapep"/>
</dbReference>
<dbReference type="InterPro" id="IPR018357">
    <property type="entry name" value="Hexapep_transf_CS"/>
</dbReference>
<dbReference type="InterPro" id="IPR025877">
    <property type="entry name" value="MobA-like_NTP_Trfase"/>
</dbReference>
<dbReference type="InterPro" id="IPR029044">
    <property type="entry name" value="Nucleotide-diphossugar_trans"/>
</dbReference>
<dbReference type="InterPro" id="IPR011004">
    <property type="entry name" value="Trimer_LpxA-like_sf"/>
</dbReference>
<dbReference type="NCBIfam" id="TIGR01173">
    <property type="entry name" value="glmU"/>
    <property type="match status" value="1"/>
</dbReference>
<dbReference type="NCBIfam" id="NF006986">
    <property type="entry name" value="PRK09451.1"/>
    <property type="match status" value="1"/>
</dbReference>
<dbReference type="PANTHER" id="PTHR43584:SF3">
    <property type="entry name" value="BIFUNCTIONAL PROTEIN GLMU"/>
    <property type="match status" value="1"/>
</dbReference>
<dbReference type="PANTHER" id="PTHR43584">
    <property type="entry name" value="NUCLEOTIDYL TRANSFERASE"/>
    <property type="match status" value="1"/>
</dbReference>
<dbReference type="Pfam" id="PF00132">
    <property type="entry name" value="Hexapep"/>
    <property type="match status" value="2"/>
</dbReference>
<dbReference type="Pfam" id="PF12804">
    <property type="entry name" value="NTP_transf_3"/>
    <property type="match status" value="1"/>
</dbReference>
<dbReference type="SUPFAM" id="SSF53448">
    <property type="entry name" value="Nucleotide-diphospho-sugar transferases"/>
    <property type="match status" value="1"/>
</dbReference>
<dbReference type="SUPFAM" id="SSF51161">
    <property type="entry name" value="Trimeric LpxA-like enzymes"/>
    <property type="match status" value="1"/>
</dbReference>
<dbReference type="PROSITE" id="PS00101">
    <property type="entry name" value="HEXAPEP_TRANSFERASES"/>
    <property type="match status" value="1"/>
</dbReference>
<reference key="1">
    <citation type="journal article" date="1995" name="Science">
        <title>Whole-genome random sequencing and assembly of Haemophilus influenzae Rd.</title>
        <authorList>
            <person name="Fleischmann R.D."/>
            <person name="Adams M.D."/>
            <person name="White O."/>
            <person name="Clayton R.A."/>
            <person name="Kirkness E.F."/>
            <person name="Kerlavage A.R."/>
            <person name="Bult C.J."/>
            <person name="Tomb J.-F."/>
            <person name="Dougherty B.A."/>
            <person name="Merrick J.M."/>
            <person name="McKenney K."/>
            <person name="Sutton G.G."/>
            <person name="FitzHugh W."/>
            <person name="Fields C.A."/>
            <person name="Gocayne J.D."/>
            <person name="Scott J.D."/>
            <person name="Shirley R."/>
            <person name="Liu L.-I."/>
            <person name="Glodek A."/>
            <person name="Kelley J.M."/>
            <person name="Weidman J.F."/>
            <person name="Phillips C.A."/>
            <person name="Spriggs T."/>
            <person name="Hedblom E."/>
            <person name="Cotton M.D."/>
            <person name="Utterback T.R."/>
            <person name="Hanna M.C."/>
            <person name="Nguyen D.T."/>
            <person name="Saudek D.M."/>
            <person name="Brandon R.C."/>
            <person name="Fine L.D."/>
            <person name="Fritchman J.L."/>
            <person name="Fuhrmann J.L."/>
            <person name="Geoghagen N.S.M."/>
            <person name="Gnehm C.L."/>
            <person name="McDonald L.A."/>
            <person name="Small K.V."/>
            <person name="Fraser C.M."/>
            <person name="Smith H.O."/>
            <person name="Venter J.C."/>
        </authorList>
    </citation>
    <scope>NUCLEOTIDE SEQUENCE [LARGE SCALE GENOMIC DNA]</scope>
    <source>
        <strain>ATCC 51907 / DSM 11121 / KW20 / Rd</strain>
    </source>
</reference>
<reference key="2">
    <citation type="journal article" date="2007" name="Protein Sci.">
        <title>Characterization of substrate binding and catalysis in the potential antibacterial target N-acetylglucosamine-1-phosphate uridyltransferase (GlmU).</title>
        <authorList>
            <person name="Mochalkin I."/>
            <person name="Lightle S."/>
            <person name="Zhu Y."/>
            <person name="Ohren J.F."/>
            <person name="Spessard C."/>
            <person name="Chirgadze N.Y."/>
            <person name="Banotai C."/>
            <person name="Melnick M."/>
            <person name="McDowell L."/>
        </authorList>
    </citation>
    <scope>X-RAY CRYSTALLOGRAPHY (1.79 ANGSTROMS) IN COMPLEX WITH SUBSTRATE ANALOGS</scope>
    <scope>FUNCTION</scope>
    <scope>MUTAGENESIS OF LYS-25; GLN-76; TYR-103; ASP-105; VAL-223 AND GLU-224</scope>
    <scope>REACTION MECHANISM</scope>
    <scope>SUBUNIT</scope>
</reference>
<reference key="3">
    <citation type="journal article" date="2008" name="Protein Sci.">
        <title>Structure of a small-molecule inhibitor complexed with GlmU from Haemophilus influenzae reveals an allosteric binding site.</title>
        <authorList>
            <person name="Mochalkin I."/>
            <person name="Lightle S."/>
            <person name="Narasimhan L."/>
            <person name="Bornemeier D."/>
            <person name="Melnick M."/>
            <person name="Vanderroest S."/>
            <person name="McDowell L."/>
        </authorList>
    </citation>
    <scope>X-RAY CRYSTALLOGRAPHY (1.90 ANGSTROMS) IN COMPLEX WITH SUBSTRATE ANALOGS</scope>
    <scope>SUBUNIT</scope>
</reference>
<reference key="4">
    <citation type="submission" date="2008-10" db="PDB data bank">
        <title>Discovery and initial sar of quinazoline inhibitors of GlmU from Haemophilus influenzae.</title>
        <authorList>
            <person name="Melnick M."/>
            <person name="Mochalkin I."/>
            <person name="Lightle S."/>
            <person name="Narasimhan L."/>
            <person name="Mcdowell L."/>
            <person name="Sarver R."/>
        </authorList>
    </citation>
    <scope>X-RAY CRYSTALLOGRAPHY (1.99 ANGSTROMS) IN COMPLEX WITH SUBSTRATE ANALOGS</scope>
</reference>
<reference key="5">
    <citation type="journal article" date="2012" name="Biochem. J.">
        <title>An aminoquinazoline inhibitor of the essential bacterial cell wall synthetic enzyme GlmU has a unique non-protein-kinase-like binding mode.</title>
        <authorList>
            <person name="Larsen N.A."/>
            <person name="Nash T.J."/>
            <person name="Morningstar M."/>
            <person name="Shapiro A.B."/>
            <person name="Joubran C."/>
            <person name="Blackett C.J."/>
            <person name="Patten A.D."/>
            <person name="Boriack-Sjodin P.A."/>
            <person name="Doig P."/>
        </authorList>
    </citation>
    <scope>X-RAY CRYSTALLOGRAPHY (2.00 ANGSTROMS) IN COMPLEX WITH SUBSTRATE ANALOG</scope>
</reference>
<reference key="6">
    <citation type="journal article" date="2014" name="Bioorg. Med. Chem.">
        <title>Rational design of inhibitors of the bacterial cell wall synthetic enzyme GlmU using virtual screening and lead-hopping.</title>
        <authorList>
            <person name="Doig P."/>
            <person name="Boriack-Sjodin P.A."/>
            <person name="Dumas J."/>
            <person name="Hu J."/>
            <person name="Itoh K."/>
            <person name="Johnson K."/>
            <person name="Kazmirski S."/>
            <person name="Kinoshita T."/>
            <person name="Kuroda S."/>
            <person name="Sato T.O."/>
            <person name="Sugimoto K."/>
            <person name="Tohyama K."/>
            <person name="Aoi H."/>
            <person name="Wakamatsu K."/>
            <person name="Wang H."/>
        </authorList>
    </citation>
    <scope>X-RAY CRYSTALLOGRAPHY (1.90 ANGSTROMS) IN COMPLEX WITH SUBSTRATE ANALOGS</scope>
</reference>
<gene>
    <name evidence="2" type="primary">glmU</name>
    <name type="ordered locus">HI_0642</name>
</gene>
<comment type="function">
    <text evidence="2 3">Catalyzes the last two sequential reactions in the de novo biosynthetic pathway for UDP-N-acetylglucosamine (UDP-GlcNAc). The C-terminal domain catalyzes the transfer of acetyl group from acetyl coenzyme A to glucosamine-1-phosphate (GlcN-1-P) to produce N-acetylglucosamine-1-phosphate (GlcNAc-1-P), which is converted into UDP-GlcNAc by the transfer of uridine 5-monophosphate (from uridine 5-triphosphate), a reaction catalyzed by the N-terminal domain.</text>
</comment>
<comment type="catalytic activity">
    <reaction evidence="2">
        <text>alpha-D-glucosamine 1-phosphate + acetyl-CoA = N-acetyl-alpha-D-glucosamine 1-phosphate + CoA + H(+)</text>
        <dbReference type="Rhea" id="RHEA:13725"/>
        <dbReference type="ChEBI" id="CHEBI:15378"/>
        <dbReference type="ChEBI" id="CHEBI:57287"/>
        <dbReference type="ChEBI" id="CHEBI:57288"/>
        <dbReference type="ChEBI" id="CHEBI:57776"/>
        <dbReference type="ChEBI" id="CHEBI:58516"/>
        <dbReference type="EC" id="2.3.1.157"/>
    </reaction>
</comment>
<comment type="catalytic activity">
    <reaction evidence="2">
        <text>N-acetyl-alpha-D-glucosamine 1-phosphate + UTP + H(+) = UDP-N-acetyl-alpha-D-glucosamine + diphosphate</text>
        <dbReference type="Rhea" id="RHEA:13509"/>
        <dbReference type="ChEBI" id="CHEBI:15378"/>
        <dbReference type="ChEBI" id="CHEBI:33019"/>
        <dbReference type="ChEBI" id="CHEBI:46398"/>
        <dbReference type="ChEBI" id="CHEBI:57705"/>
        <dbReference type="ChEBI" id="CHEBI:57776"/>
        <dbReference type="EC" id="2.7.7.23"/>
    </reaction>
</comment>
<comment type="cofactor">
    <cofactor evidence="2">
        <name>Mg(2+)</name>
        <dbReference type="ChEBI" id="CHEBI:18420"/>
    </cofactor>
    <text evidence="2">Binds 1 Mg(2+) ion per subunit.</text>
</comment>
<comment type="pathway">
    <text evidence="2">Nucleotide-sugar biosynthesis; UDP-N-acetyl-alpha-D-glucosamine biosynthesis; N-acetyl-alpha-D-glucosamine 1-phosphate from alpha-D-glucosamine 6-phosphate (route II): step 2/2.</text>
</comment>
<comment type="pathway">
    <text evidence="2">Nucleotide-sugar biosynthesis; UDP-N-acetyl-alpha-D-glucosamine biosynthesis; UDP-N-acetyl-alpha-D-glucosamine from N-acetyl-alpha-D-glucosamine 1-phosphate: step 1/1.</text>
</comment>
<comment type="pathway">
    <text evidence="2">Bacterial outer membrane biogenesis; LPS lipid A biosynthesis.</text>
</comment>
<comment type="subunit">
    <text evidence="2 3 4 7">Homotrimer.</text>
</comment>
<comment type="subcellular location">
    <subcellularLocation>
        <location evidence="2">Cytoplasm</location>
    </subcellularLocation>
</comment>
<comment type="similarity">
    <text evidence="2 8">In the N-terminal section; belongs to the N-acetylglucosamine-1-phosphate uridyltransferase family.</text>
</comment>
<comment type="similarity">
    <text evidence="2 8">In the C-terminal section; belongs to the transferase hexapeptide repeat family.</text>
</comment>
<protein>
    <recommendedName>
        <fullName evidence="2">Bifunctional protein GlmU</fullName>
    </recommendedName>
    <domain>
        <recommendedName>
            <fullName evidence="2">UDP-N-acetylglucosamine pyrophosphorylase</fullName>
            <ecNumber evidence="2">2.7.7.23</ecNumber>
        </recommendedName>
        <alternativeName>
            <fullName evidence="2">N-acetylglucosamine-1-phosphate uridyltransferase</fullName>
        </alternativeName>
    </domain>
    <domain>
        <recommendedName>
            <fullName evidence="2">Glucosamine-1-phosphate N-acetyltransferase</fullName>
            <ecNumber evidence="2">2.3.1.157</ecNumber>
        </recommendedName>
    </domain>
</protein>
<sequence>MTKKALSAVILAAGKGTRMYSDLPKVLHTIAGKPMVKHVIDTAHQLGSENIHLIYGHGGDLMRTHLANEQVNWVLQTEQLGTAHAVQQAAPFFKDNENIVVLYGDAPLITKETLEKLIEAKPENGIALLTVNLDNPTGYGRIIRENGNVVAIVEQKDANAEQLNIKEVNTGVMVSDGASFKKWLARVGNNNAQGEYYLTDLIALANQDNCQVVAVQATDVMEVEGANNRLQLAALERYFQNKQASKLLLEGVMIYDPARFDLRGTLEHGKDVEIDVNVIIEGNVKLGDRVKIGTGCVLKNVVIGNDVEIKPYSVLEDSIVGEKAAIGPFSRLRPGAELAAETHVGNFVEIKKSTVGKGSKVNHLTYVGDSEIGSNCNIGAGVITCNYDGANKFKTIIGDDVFVGSDTQLVAPVKVANGATIGAGTTITRDVGENELVITRVAQRHIQGWQRPIKKK</sequence>
<proteinExistence type="evidence at protein level"/>
<feature type="chain" id="PRO_0000068703" description="Bifunctional protein GlmU">
    <location>
        <begin position="1"/>
        <end position="456"/>
    </location>
</feature>
<feature type="region of interest" description="Pyrophosphorylase" evidence="2">
    <location>
        <begin position="1"/>
        <end position="229"/>
    </location>
</feature>
<feature type="region of interest" description="Linker" evidence="2">
    <location>
        <begin position="230"/>
        <end position="250"/>
    </location>
</feature>
<feature type="region of interest" description="N-acetyltransferase" evidence="2">
    <location>
        <begin position="251"/>
        <end position="456"/>
    </location>
</feature>
<feature type="active site" description="Proton acceptor" evidence="2">
    <location>
        <position position="363"/>
    </location>
</feature>
<feature type="binding site" evidence="2 3 5 6">
    <location>
        <begin position="11"/>
        <end position="14"/>
    </location>
    <ligand>
        <name>UDP-N-acetyl-alpha-D-glucosamine</name>
        <dbReference type="ChEBI" id="CHEBI:57705"/>
    </ligand>
</feature>
<feature type="binding site" evidence="2">
    <location>
        <position position="25"/>
    </location>
    <ligand>
        <name>UDP-N-acetyl-alpha-D-glucosamine</name>
        <dbReference type="ChEBI" id="CHEBI:57705"/>
    </ligand>
</feature>
<feature type="binding site" evidence="2 6">
    <location>
        <position position="76"/>
    </location>
    <ligand>
        <name>UDP-N-acetyl-alpha-D-glucosamine</name>
        <dbReference type="ChEBI" id="CHEBI:57705"/>
    </ligand>
</feature>
<feature type="binding site" evidence="2 3 6">
    <location>
        <begin position="81"/>
        <end position="82"/>
    </location>
    <ligand>
        <name>UDP-N-acetyl-alpha-D-glucosamine</name>
        <dbReference type="ChEBI" id="CHEBI:57705"/>
    </ligand>
</feature>
<feature type="binding site" evidence="2 3 5 6">
    <location>
        <begin position="103"/>
        <end position="105"/>
    </location>
    <ligand>
        <name>UDP-N-acetyl-alpha-D-glucosamine</name>
        <dbReference type="ChEBI" id="CHEBI:57705"/>
    </ligand>
</feature>
<feature type="binding site" evidence="2">
    <location>
        <position position="105"/>
    </location>
    <ligand>
        <name>Mg(2+)</name>
        <dbReference type="ChEBI" id="CHEBI:18420"/>
    </ligand>
</feature>
<feature type="binding site" evidence="2 3">
    <location>
        <position position="140"/>
    </location>
    <ligand>
        <name>UDP-N-acetyl-alpha-D-glucosamine</name>
        <dbReference type="ChEBI" id="CHEBI:57705"/>
    </ligand>
</feature>
<feature type="binding site" evidence="2 3">
    <location>
        <position position="154"/>
    </location>
    <ligand>
        <name>UDP-N-acetyl-alpha-D-glucosamine</name>
        <dbReference type="ChEBI" id="CHEBI:57705"/>
    </ligand>
</feature>
<feature type="binding site" evidence="2 3">
    <location>
        <position position="169"/>
    </location>
    <ligand>
        <name>UDP-N-acetyl-alpha-D-glucosamine</name>
        <dbReference type="ChEBI" id="CHEBI:57705"/>
    </ligand>
</feature>
<feature type="binding site" evidence="2">
    <location>
        <position position="227"/>
    </location>
    <ligand>
        <name>Mg(2+)</name>
        <dbReference type="ChEBI" id="CHEBI:18420"/>
    </ligand>
</feature>
<feature type="binding site" evidence="2">
    <location>
        <position position="227"/>
    </location>
    <ligand>
        <name>UDP-N-acetyl-alpha-D-glucosamine</name>
        <dbReference type="ChEBI" id="CHEBI:57705"/>
    </ligand>
</feature>
<feature type="binding site" evidence="2">
    <location>
        <position position="333"/>
    </location>
    <ligand>
        <name>UDP-N-acetyl-alpha-D-glucosamine</name>
        <dbReference type="ChEBI" id="CHEBI:57705"/>
    </ligand>
</feature>
<feature type="binding site" evidence="2">
    <location>
        <position position="351"/>
    </location>
    <ligand>
        <name>UDP-N-acetyl-alpha-D-glucosamine</name>
        <dbReference type="ChEBI" id="CHEBI:57705"/>
    </ligand>
</feature>
<feature type="binding site" evidence="2">
    <location>
        <position position="366"/>
    </location>
    <ligand>
        <name>UDP-N-acetyl-alpha-D-glucosamine</name>
        <dbReference type="ChEBI" id="CHEBI:57705"/>
    </ligand>
</feature>
<feature type="binding site" evidence="2">
    <location>
        <position position="377"/>
    </location>
    <ligand>
        <name>UDP-N-acetyl-alpha-D-glucosamine</name>
        <dbReference type="ChEBI" id="CHEBI:57705"/>
    </ligand>
</feature>
<feature type="binding site" evidence="1 2">
    <location>
        <position position="380"/>
    </location>
    <ligand>
        <name>acetyl-CoA</name>
        <dbReference type="ChEBI" id="CHEBI:57288"/>
    </ligand>
</feature>
<feature type="binding site" evidence="2">
    <location>
        <begin position="386"/>
        <end position="387"/>
    </location>
    <ligand>
        <name>acetyl-CoA</name>
        <dbReference type="ChEBI" id="CHEBI:57288"/>
    </ligand>
</feature>
<feature type="binding site" evidence="2">
    <location>
        <position position="405"/>
    </location>
    <ligand>
        <name>acetyl-CoA</name>
        <dbReference type="ChEBI" id="CHEBI:57288"/>
    </ligand>
</feature>
<feature type="binding site" evidence="2">
    <location>
        <position position="423"/>
    </location>
    <ligand>
        <name>acetyl-CoA</name>
        <dbReference type="ChEBI" id="CHEBI:57288"/>
    </ligand>
</feature>
<feature type="binding site" evidence="2">
    <location>
        <position position="440"/>
    </location>
    <ligand>
        <name>acetyl-CoA</name>
        <dbReference type="ChEBI" id="CHEBI:57288"/>
    </ligand>
</feature>
<feature type="mutagenesis site" description="No pyrophosphorylase activity." evidence="3">
    <original>K</original>
    <variation>A</variation>
    <location>
        <position position="25"/>
    </location>
</feature>
<feature type="mutagenesis site" description="No pyrophosphorylase activity." evidence="3">
    <original>Q</original>
    <variation>A</variation>
    <location>
        <position position="76"/>
    </location>
</feature>
<feature type="mutagenesis site" description="Reduces the pyrophosphorylase activity." evidence="3">
    <original>Y</original>
    <variation>A</variation>
    <location>
        <position position="103"/>
    </location>
</feature>
<feature type="mutagenesis site" description="No pyrophosphorylase activity." evidence="3">
    <original>D</original>
    <variation>A</variation>
    <location>
        <position position="105"/>
    </location>
</feature>
<feature type="mutagenesis site" description="Reduces slightly the pyrophosphorylase activity." evidence="3">
    <original>V</original>
    <variation>A</variation>
    <location>
        <position position="223"/>
    </location>
</feature>
<feature type="mutagenesis site" description="Reduces the pyrophosphorylase activity." evidence="3">
    <original>E</original>
    <variation>A</variation>
    <location>
        <position position="224"/>
    </location>
</feature>
<feature type="strand" evidence="9">
    <location>
        <begin position="6"/>
        <end position="11"/>
    </location>
</feature>
<feature type="helix" evidence="9">
    <location>
        <begin position="17"/>
        <end position="19"/>
    </location>
</feature>
<feature type="strand" evidence="9">
    <location>
        <begin position="21"/>
        <end position="23"/>
    </location>
</feature>
<feature type="helix" evidence="9">
    <location>
        <begin position="25"/>
        <end position="27"/>
    </location>
</feature>
<feature type="strand" evidence="9">
    <location>
        <begin position="28"/>
        <end position="30"/>
    </location>
</feature>
<feature type="helix" evidence="9">
    <location>
        <begin position="35"/>
        <end position="45"/>
    </location>
</feature>
<feature type="strand" evidence="9">
    <location>
        <begin position="51"/>
        <end position="55"/>
    </location>
</feature>
<feature type="helix" evidence="9">
    <location>
        <begin position="59"/>
        <end position="65"/>
    </location>
</feature>
<feature type="turn" evidence="9">
    <location>
        <begin position="66"/>
        <end position="68"/>
    </location>
</feature>
<feature type="strand" evidence="9">
    <location>
        <begin position="72"/>
        <end position="75"/>
    </location>
</feature>
<feature type="helix" evidence="9">
    <location>
        <begin position="82"/>
        <end position="89"/>
    </location>
</feature>
<feature type="helix" evidence="9">
    <location>
        <begin position="90"/>
        <end position="92"/>
    </location>
</feature>
<feature type="strand" evidence="9">
    <location>
        <begin position="97"/>
        <end position="103"/>
    </location>
</feature>
<feature type="helix" evidence="9">
    <location>
        <begin position="111"/>
        <end position="120"/>
    </location>
</feature>
<feature type="strand" evidence="9">
    <location>
        <begin position="125"/>
        <end position="132"/>
    </location>
</feature>
<feature type="strand" evidence="9">
    <location>
        <begin position="141"/>
        <end position="145"/>
    </location>
</feature>
<feature type="strand" evidence="9">
    <location>
        <begin position="148"/>
        <end position="153"/>
    </location>
</feature>
<feature type="turn" evidence="9">
    <location>
        <begin position="155"/>
        <end position="157"/>
    </location>
</feature>
<feature type="helix" evidence="9">
    <location>
        <begin position="160"/>
        <end position="163"/>
    </location>
</feature>
<feature type="strand" evidence="9">
    <location>
        <begin position="167"/>
        <end position="176"/>
    </location>
</feature>
<feature type="helix" evidence="9">
    <location>
        <begin position="177"/>
        <end position="184"/>
    </location>
</feature>
<feature type="helix" evidence="9">
    <location>
        <begin position="198"/>
        <end position="200"/>
    </location>
</feature>
<feature type="helix" evidence="9">
    <location>
        <begin position="201"/>
        <end position="207"/>
    </location>
</feature>
<feature type="strand" evidence="9">
    <location>
        <begin position="212"/>
        <end position="216"/>
    </location>
</feature>
<feature type="helix" evidence="9">
    <location>
        <begin position="221"/>
        <end position="223"/>
    </location>
</feature>
<feature type="helix" evidence="9">
    <location>
        <begin position="229"/>
        <end position="249"/>
    </location>
</feature>
<feature type="strand" evidence="9">
    <location>
        <begin position="253"/>
        <end position="255"/>
    </location>
</feature>
<feature type="helix" evidence="9">
    <location>
        <begin position="257"/>
        <end position="259"/>
    </location>
</feature>
<feature type="strand" evidence="9">
    <location>
        <begin position="260"/>
        <end position="268"/>
    </location>
</feature>
<feature type="strand" evidence="9">
    <location>
        <begin position="276"/>
        <end position="286"/>
    </location>
</feature>
<feature type="strand" evidence="9">
    <location>
        <begin position="297"/>
        <end position="303"/>
    </location>
</feature>
<feature type="strand" evidence="9">
    <location>
        <begin position="314"/>
        <end position="320"/>
    </location>
</feature>
<feature type="strand" evidence="9">
    <location>
        <begin position="328"/>
        <end position="332"/>
    </location>
</feature>
<feature type="strand" evidence="10">
    <location>
        <begin position="336"/>
        <end position="338"/>
    </location>
</feature>
<feature type="strand" evidence="9">
    <location>
        <begin position="343"/>
        <end position="352"/>
    </location>
</feature>
<feature type="strand" evidence="9">
    <location>
        <begin position="360"/>
        <end position="372"/>
    </location>
</feature>
<feature type="strand" evidence="9">
    <location>
        <begin position="383"/>
        <end position="386"/>
    </location>
</feature>
<feature type="strand" evidence="9">
    <location>
        <begin position="388"/>
        <end position="391"/>
    </location>
</feature>
<feature type="strand" evidence="9">
    <location>
        <begin position="395"/>
        <end position="397"/>
    </location>
</feature>
<feature type="strand" evidence="9">
    <location>
        <begin position="408"/>
        <end position="415"/>
    </location>
</feature>
<evidence type="ECO:0000250" key="1">
    <source>
        <dbReference type="UniProtKB" id="P0ACC7"/>
    </source>
</evidence>
<evidence type="ECO:0000255" key="2">
    <source>
        <dbReference type="HAMAP-Rule" id="MF_01631"/>
    </source>
</evidence>
<evidence type="ECO:0000269" key="3">
    <source>
    </source>
</evidence>
<evidence type="ECO:0000269" key="4">
    <source>
    </source>
</evidence>
<evidence type="ECO:0000269" key="5">
    <source>
    </source>
</evidence>
<evidence type="ECO:0000269" key="6">
    <source>
    </source>
</evidence>
<evidence type="ECO:0000269" key="7">
    <source ref="4"/>
</evidence>
<evidence type="ECO:0000305" key="8"/>
<evidence type="ECO:0007829" key="9">
    <source>
        <dbReference type="PDB" id="2V0H"/>
    </source>
</evidence>
<evidence type="ECO:0007829" key="10">
    <source>
        <dbReference type="PDB" id="2W0W"/>
    </source>
</evidence>
<accession>P43889</accession>
<name>GLMU_HAEIN</name>
<keyword id="KW-0002">3D-structure</keyword>
<keyword id="KW-0012">Acyltransferase</keyword>
<keyword id="KW-0133">Cell shape</keyword>
<keyword id="KW-0961">Cell wall biogenesis/degradation</keyword>
<keyword id="KW-0963">Cytoplasm</keyword>
<keyword id="KW-0460">Magnesium</keyword>
<keyword id="KW-0479">Metal-binding</keyword>
<keyword id="KW-0511">Multifunctional enzyme</keyword>
<keyword id="KW-0548">Nucleotidyltransferase</keyword>
<keyword id="KW-0573">Peptidoglycan synthesis</keyword>
<keyword id="KW-1185">Reference proteome</keyword>
<keyword id="KW-0677">Repeat</keyword>
<keyword id="KW-0808">Transferase</keyword>